<gene>
    <name evidence="1" type="primary">rplU</name>
    <name type="ordered locus">Sama_2829</name>
</gene>
<organism>
    <name type="scientific">Shewanella amazonensis (strain ATCC BAA-1098 / SB2B)</name>
    <dbReference type="NCBI Taxonomy" id="326297"/>
    <lineage>
        <taxon>Bacteria</taxon>
        <taxon>Pseudomonadati</taxon>
        <taxon>Pseudomonadota</taxon>
        <taxon>Gammaproteobacteria</taxon>
        <taxon>Alteromonadales</taxon>
        <taxon>Shewanellaceae</taxon>
        <taxon>Shewanella</taxon>
    </lineage>
</organism>
<keyword id="KW-1185">Reference proteome</keyword>
<keyword id="KW-0687">Ribonucleoprotein</keyword>
<keyword id="KW-0689">Ribosomal protein</keyword>
<keyword id="KW-0694">RNA-binding</keyword>
<keyword id="KW-0699">rRNA-binding</keyword>
<accession>A1S9H5</accession>
<comment type="function">
    <text evidence="1">This protein binds to 23S rRNA in the presence of protein L20.</text>
</comment>
<comment type="subunit">
    <text evidence="1">Part of the 50S ribosomal subunit. Contacts protein L20.</text>
</comment>
<comment type="similarity">
    <text evidence="1">Belongs to the bacterial ribosomal protein bL21 family.</text>
</comment>
<name>RL21_SHEAM</name>
<sequence length="103" mass="11413">MYAVFQSGGKQHRVAEGHTVRLEKIEVATGETIEFDQVLLVADGENVKVGAPLVAGGKVVATVVAHGRGEKVTIQKFRRRKHHEKKMGHRQWFTEVKITAINA</sequence>
<protein>
    <recommendedName>
        <fullName evidence="1">Large ribosomal subunit protein bL21</fullName>
    </recommendedName>
    <alternativeName>
        <fullName evidence="2">50S ribosomal protein L21</fullName>
    </alternativeName>
</protein>
<evidence type="ECO:0000255" key="1">
    <source>
        <dbReference type="HAMAP-Rule" id="MF_01363"/>
    </source>
</evidence>
<evidence type="ECO:0000305" key="2"/>
<reference key="1">
    <citation type="submission" date="2006-12" db="EMBL/GenBank/DDBJ databases">
        <title>Complete sequence of Shewanella amazonensis SB2B.</title>
        <authorList>
            <consortium name="US DOE Joint Genome Institute"/>
            <person name="Copeland A."/>
            <person name="Lucas S."/>
            <person name="Lapidus A."/>
            <person name="Barry K."/>
            <person name="Detter J.C."/>
            <person name="Glavina del Rio T."/>
            <person name="Hammon N."/>
            <person name="Israni S."/>
            <person name="Dalin E."/>
            <person name="Tice H."/>
            <person name="Pitluck S."/>
            <person name="Munk A.C."/>
            <person name="Brettin T."/>
            <person name="Bruce D."/>
            <person name="Han C."/>
            <person name="Tapia R."/>
            <person name="Gilna P."/>
            <person name="Schmutz J."/>
            <person name="Larimer F."/>
            <person name="Land M."/>
            <person name="Hauser L."/>
            <person name="Kyrpides N."/>
            <person name="Mikhailova N."/>
            <person name="Fredrickson J."/>
            <person name="Richardson P."/>
        </authorList>
    </citation>
    <scope>NUCLEOTIDE SEQUENCE [LARGE SCALE GENOMIC DNA]</scope>
    <source>
        <strain>ATCC BAA-1098 / SB2B</strain>
    </source>
</reference>
<proteinExistence type="inferred from homology"/>
<feature type="chain" id="PRO_1000067893" description="Large ribosomal subunit protein bL21">
    <location>
        <begin position="1"/>
        <end position="103"/>
    </location>
</feature>
<dbReference type="EMBL" id="CP000507">
    <property type="protein sequence ID" value="ABM01032.1"/>
    <property type="molecule type" value="Genomic_DNA"/>
</dbReference>
<dbReference type="RefSeq" id="WP_011760937.1">
    <property type="nucleotide sequence ID" value="NC_008700.1"/>
</dbReference>
<dbReference type="SMR" id="A1S9H5"/>
<dbReference type="STRING" id="326297.Sama_2829"/>
<dbReference type="KEGG" id="saz:Sama_2829"/>
<dbReference type="eggNOG" id="COG0261">
    <property type="taxonomic scope" value="Bacteria"/>
</dbReference>
<dbReference type="HOGENOM" id="CLU_061463_3_3_6"/>
<dbReference type="OrthoDB" id="9813334at2"/>
<dbReference type="Proteomes" id="UP000009175">
    <property type="component" value="Chromosome"/>
</dbReference>
<dbReference type="GO" id="GO:0005737">
    <property type="term" value="C:cytoplasm"/>
    <property type="evidence" value="ECO:0007669"/>
    <property type="project" value="UniProtKB-ARBA"/>
</dbReference>
<dbReference type="GO" id="GO:1990904">
    <property type="term" value="C:ribonucleoprotein complex"/>
    <property type="evidence" value="ECO:0007669"/>
    <property type="project" value="UniProtKB-KW"/>
</dbReference>
<dbReference type="GO" id="GO:0005840">
    <property type="term" value="C:ribosome"/>
    <property type="evidence" value="ECO:0007669"/>
    <property type="project" value="UniProtKB-KW"/>
</dbReference>
<dbReference type="GO" id="GO:0019843">
    <property type="term" value="F:rRNA binding"/>
    <property type="evidence" value="ECO:0007669"/>
    <property type="project" value="UniProtKB-UniRule"/>
</dbReference>
<dbReference type="GO" id="GO:0003735">
    <property type="term" value="F:structural constituent of ribosome"/>
    <property type="evidence" value="ECO:0007669"/>
    <property type="project" value="InterPro"/>
</dbReference>
<dbReference type="GO" id="GO:0006412">
    <property type="term" value="P:translation"/>
    <property type="evidence" value="ECO:0007669"/>
    <property type="project" value="UniProtKB-UniRule"/>
</dbReference>
<dbReference type="HAMAP" id="MF_01363">
    <property type="entry name" value="Ribosomal_bL21"/>
    <property type="match status" value="1"/>
</dbReference>
<dbReference type="InterPro" id="IPR028909">
    <property type="entry name" value="bL21-like"/>
</dbReference>
<dbReference type="InterPro" id="IPR036164">
    <property type="entry name" value="bL21-like_sf"/>
</dbReference>
<dbReference type="InterPro" id="IPR001787">
    <property type="entry name" value="Ribosomal_bL21"/>
</dbReference>
<dbReference type="InterPro" id="IPR018258">
    <property type="entry name" value="Ribosomal_bL21_CS"/>
</dbReference>
<dbReference type="NCBIfam" id="TIGR00061">
    <property type="entry name" value="L21"/>
    <property type="match status" value="1"/>
</dbReference>
<dbReference type="PANTHER" id="PTHR21349">
    <property type="entry name" value="50S RIBOSOMAL PROTEIN L21"/>
    <property type="match status" value="1"/>
</dbReference>
<dbReference type="PANTHER" id="PTHR21349:SF0">
    <property type="entry name" value="LARGE RIBOSOMAL SUBUNIT PROTEIN BL21M"/>
    <property type="match status" value="1"/>
</dbReference>
<dbReference type="Pfam" id="PF00829">
    <property type="entry name" value="Ribosomal_L21p"/>
    <property type="match status" value="1"/>
</dbReference>
<dbReference type="SUPFAM" id="SSF141091">
    <property type="entry name" value="L21p-like"/>
    <property type="match status" value="1"/>
</dbReference>
<dbReference type="PROSITE" id="PS01169">
    <property type="entry name" value="RIBOSOMAL_L21"/>
    <property type="match status" value="1"/>
</dbReference>